<name>GUAA_STRP7</name>
<organism>
    <name type="scientific">Streptococcus pneumoniae (strain 70585)</name>
    <dbReference type="NCBI Taxonomy" id="488221"/>
    <lineage>
        <taxon>Bacteria</taxon>
        <taxon>Bacillati</taxon>
        <taxon>Bacillota</taxon>
        <taxon>Bacilli</taxon>
        <taxon>Lactobacillales</taxon>
        <taxon>Streptococcaceae</taxon>
        <taxon>Streptococcus</taxon>
    </lineage>
</organism>
<accession>C1C842</accession>
<proteinExistence type="inferred from homology"/>
<dbReference type="EC" id="6.3.5.2" evidence="1"/>
<dbReference type="EMBL" id="CP000918">
    <property type="protein sequence ID" value="ACO16381.1"/>
    <property type="molecule type" value="Genomic_DNA"/>
</dbReference>
<dbReference type="RefSeq" id="WP_000065723.1">
    <property type="nucleotide sequence ID" value="NC_012468.1"/>
</dbReference>
<dbReference type="SMR" id="C1C842"/>
<dbReference type="MEROPS" id="C26.957"/>
<dbReference type="GeneID" id="45653302"/>
<dbReference type="KEGG" id="snm:SP70585_1485"/>
<dbReference type="HOGENOM" id="CLU_014340_0_5_9"/>
<dbReference type="UniPathway" id="UPA00189">
    <property type="reaction ID" value="UER00296"/>
</dbReference>
<dbReference type="Proteomes" id="UP000002211">
    <property type="component" value="Chromosome"/>
</dbReference>
<dbReference type="GO" id="GO:0005829">
    <property type="term" value="C:cytosol"/>
    <property type="evidence" value="ECO:0007669"/>
    <property type="project" value="TreeGrafter"/>
</dbReference>
<dbReference type="GO" id="GO:0005524">
    <property type="term" value="F:ATP binding"/>
    <property type="evidence" value="ECO:0007669"/>
    <property type="project" value="UniProtKB-UniRule"/>
</dbReference>
<dbReference type="GO" id="GO:0003921">
    <property type="term" value="F:GMP synthase activity"/>
    <property type="evidence" value="ECO:0007669"/>
    <property type="project" value="InterPro"/>
</dbReference>
<dbReference type="CDD" id="cd01742">
    <property type="entry name" value="GATase1_GMP_Synthase"/>
    <property type="match status" value="1"/>
</dbReference>
<dbReference type="CDD" id="cd01997">
    <property type="entry name" value="GMP_synthase_C"/>
    <property type="match status" value="1"/>
</dbReference>
<dbReference type="FunFam" id="3.30.300.10:FF:000002">
    <property type="entry name" value="GMP synthase [glutamine-hydrolyzing]"/>
    <property type="match status" value="1"/>
</dbReference>
<dbReference type="FunFam" id="3.40.50.620:FF:000001">
    <property type="entry name" value="GMP synthase [glutamine-hydrolyzing]"/>
    <property type="match status" value="1"/>
</dbReference>
<dbReference type="FunFam" id="3.40.50.880:FF:000001">
    <property type="entry name" value="GMP synthase [glutamine-hydrolyzing]"/>
    <property type="match status" value="1"/>
</dbReference>
<dbReference type="Gene3D" id="3.30.300.10">
    <property type="match status" value="1"/>
</dbReference>
<dbReference type="Gene3D" id="3.40.50.880">
    <property type="match status" value="1"/>
</dbReference>
<dbReference type="Gene3D" id="3.40.50.620">
    <property type="entry name" value="HUPs"/>
    <property type="match status" value="1"/>
</dbReference>
<dbReference type="HAMAP" id="MF_00344">
    <property type="entry name" value="GMP_synthase"/>
    <property type="match status" value="1"/>
</dbReference>
<dbReference type="InterPro" id="IPR029062">
    <property type="entry name" value="Class_I_gatase-like"/>
</dbReference>
<dbReference type="InterPro" id="IPR017926">
    <property type="entry name" value="GATASE"/>
</dbReference>
<dbReference type="InterPro" id="IPR001674">
    <property type="entry name" value="GMP_synth_C"/>
</dbReference>
<dbReference type="InterPro" id="IPR004739">
    <property type="entry name" value="GMP_synth_GATase"/>
</dbReference>
<dbReference type="InterPro" id="IPR022955">
    <property type="entry name" value="GMP_synthase"/>
</dbReference>
<dbReference type="InterPro" id="IPR025777">
    <property type="entry name" value="GMPS_ATP_PPase_dom"/>
</dbReference>
<dbReference type="InterPro" id="IPR022310">
    <property type="entry name" value="NAD/GMP_synthase"/>
</dbReference>
<dbReference type="InterPro" id="IPR014729">
    <property type="entry name" value="Rossmann-like_a/b/a_fold"/>
</dbReference>
<dbReference type="NCBIfam" id="TIGR00884">
    <property type="entry name" value="guaA_Cterm"/>
    <property type="match status" value="1"/>
</dbReference>
<dbReference type="NCBIfam" id="TIGR00888">
    <property type="entry name" value="guaA_Nterm"/>
    <property type="match status" value="1"/>
</dbReference>
<dbReference type="NCBIfam" id="NF000848">
    <property type="entry name" value="PRK00074.1"/>
    <property type="match status" value="1"/>
</dbReference>
<dbReference type="PANTHER" id="PTHR11922:SF2">
    <property type="entry name" value="GMP SYNTHASE [GLUTAMINE-HYDROLYZING]"/>
    <property type="match status" value="1"/>
</dbReference>
<dbReference type="PANTHER" id="PTHR11922">
    <property type="entry name" value="GMP SYNTHASE-RELATED"/>
    <property type="match status" value="1"/>
</dbReference>
<dbReference type="Pfam" id="PF00117">
    <property type="entry name" value="GATase"/>
    <property type="match status" value="1"/>
</dbReference>
<dbReference type="Pfam" id="PF00958">
    <property type="entry name" value="GMP_synt_C"/>
    <property type="match status" value="1"/>
</dbReference>
<dbReference type="Pfam" id="PF02540">
    <property type="entry name" value="NAD_synthase"/>
    <property type="match status" value="1"/>
</dbReference>
<dbReference type="PRINTS" id="PR00097">
    <property type="entry name" value="ANTSNTHASEII"/>
</dbReference>
<dbReference type="PRINTS" id="PR00099">
    <property type="entry name" value="CPSGATASE"/>
</dbReference>
<dbReference type="PRINTS" id="PR00096">
    <property type="entry name" value="GATASE"/>
</dbReference>
<dbReference type="SUPFAM" id="SSF52402">
    <property type="entry name" value="Adenine nucleotide alpha hydrolases-like"/>
    <property type="match status" value="1"/>
</dbReference>
<dbReference type="SUPFAM" id="SSF52317">
    <property type="entry name" value="Class I glutamine amidotransferase-like"/>
    <property type="match status" value="1"/>
</dbReference>
<dbReference type="PROSITE" id="PS51273">
    <property type="entry name" value="GATASE_TYPE_1"/>
    <property type="match status" value="1"/>
</dbReference>
<dbReference type="PROSITE" id="PS51553">
    <property type="entry name" value="GMPS_ATP_PPASE"/>
    <property type="match status" value="1"/>
</dbReference>
<gene>
    <name evidence="1" type="primary">guaA</name>
    <name type="ordered locus">SP70585_1485</name>
</gene>
<protein>
    <recommendedName>
        <fullName evidence="1">GMP synthase [glutamine-hydrolyzing]</fullName>
        <ecNumber evidence="1">6.3.5.2</ecNumber>
    </recommendedName>
    <alternativeName>
        <fullName evidence="1">GMP synthetase</fullName>
    </alternativeName>
    <alternativeName>
        <fullName evidence="1">Glutamine amidotransferase</fullName>
    </alternativeName>
</protein>
<keyword id="KW-0067">ATP-binding</keyword>
<keyword id="KW-0315">Glutamine amidotransferase</keyword>
<keyword id="KW-0332">GMP biosynthesis</keyword>
<keyword id="KW-0436">Ligase</keyword>
<keyword id="KW-0547">Nucleotide-binding</keyword>
<keyword id="KW-0658">Purine biosynthesis</keyword>
<comment type="function">
    <text evidence="1">Catalyzes the synthesis of GMP from XMP.</text>
</comment>
<comment type="catalytic activity">
    <reaction evidence="1">
        <text>XMP + L-glutamine + ATP + H2O = GMP + L-glutamate + AMP + diphosphate + 2 H(+)</text>
        <dbReference type="Rhea" id="RHEA:11680"/>
        <dbReference type="ChEBI" id="CHEBI:15377"/>
        <dbReference type="ChEBI" id="CHEBI:15378"/>
        <dbReference type="ChEBI" id="CHEBI:29985"/>
        <dbReference type="ChEBI" id="CHEBI:30616"/>
        <dbReference type="ChEBI" id="CHEBI:33019"/>
        <dbReference type="ChEBI" id="CHEBI:57464"/>
        <dbReference type="ChEBI" id="CHEBI:58115"/>
        <dbReference type="ChEBI" id="CHEBI:58359"/>
        <dbReference type="ChEBI" id="CHEBI:456215"/>
        <dbReference type="EC" id="6.3.5.2"/>
    </reaction>
</comment>
<comment type="pathway">
    <text evidence="1">Purine metabolism; GMP biosynthesis; GMP from XMP (L-Gln route): step 1/1.</text>
</comment>
<comment type="subunit">
    <text evidence="1">Homodimer.</text>
</comment>
<reference key="1">
    <citation type="journal article" date="2010" name="Genome Biol.">
        <title>Structure and dynamics of the pan-genome of Streptococcus pneumoniae and closely related species.</title>
        <authorList>
            <person name="Donati C."/>
            <person name="Hiller N.L."/>
            <person name="Tettelin H."/>
            <person name="Muzzi A."/>
            <person name="Croucher N.J."/>
            <person name="Angiuoli S.V."/>
            <person name="Oggioni M."/>
            <person name="Dunning Hotopp J.C."/>
            <person name="Hu F.Z."/>
            <person name="Riley D.R."/>
            <person name="Covacci A."/>
            <person name="Mitchell T.J."/>
            <person name="Bentley S.D."/>
            <person name="Kilian M."/>
            <person name="Ehrlich G.D."/>
            <person name="Rappuoli R."/>
            <person name="Moxon E.R."/>
            <person name="Masignani V."/>
        </authorList>
    </citation>
    <scope>NUCLEOTIDE SEQUENCE [LARGE SCALE GENOMIC DNA]</scope>
    <source>
        <strain>70585</strain>
    </source>
</reference>
<feature type="chain" id="PRO_1000133383" description="GMP synthase [glutamine-hydrolyzing]">
    <location>
        <begin position="1"/>
        <end position="520"/>
    </location>
</feature>
<feature type="domain" description="Glutamine amidotransferase type-1" evidence="1">
    <location>
        <begin position="13"/>
        <end position="205"/>
    </location>
</feature>
<feature type="domain" description="GMPS ATP-PPase" evidence="1">
    <location>
        <begin position="206"/>
        <end position="395"/>
    </location>
</feature>
<feature type="active site" description="Nucleophile" evidence="1">
    <location>
        <position position="90"/>
    </location>
</feature>
<feature type="active site" evidence="1">
    <location>
        <position position="179"/>
    </location>
</feature>
<feature type="active site" evidence="1">
    <location>
        <position position="181"/>
    </location>
</feature>
<feature type="binding site" evidence="1">
    <location>
        <begin position="233"/>
        <end position="239"/>
    </location>
    <ligand>
        <name>ATP</name>
        <dbReference type="ChEBI" id="CHEBI:30616"/>
    </ligand>
</feature>
<evidence type="ECO:0000255" key="1">
    <source>
        <dbReference type="HAMAP-Rule" id="MF_00344"/>
    </source>
</evidence>
<sequence length="520" mass="57472">MSNISTDLQDVEKIIVLDYGSQYNQLISRRIREIGVFSELKSHKISAAEVREVNPVGIILSGGPNSVYEDGSFDIDPEIFELGIPILGICYGMQLLTHKLGGKVVPAGDAGNREYGQSTLTHTPSALFESTPDEQTVLMSHGDAVTEIPADFVRTGTSADCPYAAIENPDKHIYGIQFHPEVRHSVYGNDILRNFALNICKAKGDWSMDNFIDMQIKKIRETVGDKRVLLGLSGGVDSSVVGVLLQKAIGDQLICIFVDHGLLRKGEADQVMDMLGGKFGLNIVKADAAKRFLDKLAGVSDPEQKRKIIGNEFVYVFDDEASKLKDVKFLAQGTLYTDVIESGTDTAQTIKSHHNVGGLPEDMQFELIEPLNTLYKDEVRALGTELGMPDHIVWRQPFPGPGLAIRVMGEITEEKLETVRESDAILREEIAKAGLDRDIWQYFTVNTGVRSVGVMGDGRTYDYTIAIRAITSIDGMTADFAKIPWEVLQKISVRIVNEVDHVNRIVYDITSKPPATVEWE</sequence>